<dbReference type="EC" id="3.4.22.-"/>
<dbReference type="EC" id="7.-.-.-"/>
<dbReference type="EMBL" id="U91581">
    <property type="protein sequence ID" value="AAC72259.1"/>
    <property type="molecule type" value="Genomic_DNA"/>
</dbReference>
<dbReference type="RefSeq" id="WP_032489362.1">
    <property type="nucleotide sequence ID" value="NZ_CP053672.2"/>
</dbReference>
<dbReference type="SMR" id="P37608"/>
<dbReference type="MEROPS" id="C39.007"/>
<dbReference type="TCDB" id="3.A.1.111.5">
    <property type="family name" value="the atp-binding cassette (abc) superfamily"/>
</dbReference>
<dbReference type="GO" id="GO:0005886">
    <property type="term" value="C:plasma membrane"/>
    <property type="evidence" value="ECO:0007669"/>
    <property type="project" value="UniProtKB-SubCell"/>
</dbReference>
<dbReference type="GO" id="GO:0140359">
    <property type="term" value="F:ABC-type transporter activity"/>
    <property type="evidence" value="ECO:0007669"/>
    <property type="project" value="InterPro"/>
</dbReference>
<dbReference type="GO" id="GO:0005524">
    <property type="term" value="F:ATP binding"/>
    <property type="evidence" value="ECO:0007669"/>
    <property type="project" value="UniProtKB-KW"/>
</dbReference>
<dbReference type="GO" id="GO:0016887">
    <property type="term" value="F:ATP hydrolysis activity"/>
    <property type="evidence" value="ECO:0007669"/>
    <property type="project" value="InterPro"/>
</dbReference>
<dbReference type="GO" id="GO:0034040">
    <property type="term" value="F:ATPase-coupled lipid transmembrane transporter activity"/>
    <property type="evidence" value="ECO:0007669"/>
    <property type="project" value="TreeGrafter"/>
</dbReference>
<dbReference type="GO" id="GO:0008234">
    <property type="term" value="F:cysteine-type peptidase activity"/>
    <property type="evidence" value="ECO:0007669"/>
    <property type="project" value="UniProtKB-KW"/>
</dbReference>
<dbReference type="GO" id="GO:0043213">
    <property type="term" value="P:bacteriocin transport"/>
    <property type="evidence" value="ECO:0007669"/>
    <property type="project" value="UniProtKB-KW"/>
</dbReference>
<dbReference type="GO" id="GO:0015031">
    <property type="term" value="P:protein transport"/>
    <property type="evidence" value="ECO:0007669"/>
    <property type="project" value="UniProtKB-KW"/>
</dbReference>
<dbReference type="GO" id="GO:0006508">
    <property type="term" value="P:proteolysis"/>
    <property type="evidence" value="ECO:0007669"/>
    <property type="project" value="UniProtKB-KW"/>
</dbReference>
<dbReference type="CDD" id="cd03228">
    <property type="entry name" value="ABCC_MRP_Like"/>
    <property type="match status" value="1"/>
</dbReference>
<dbReference type="CDD" id="cd02425">
    <property type="entry name" value="Peptidase_C39F"/>
    <property type="match status" value="1"/>
</dbReference>
<dbReference type="Gene3D" id="1.20.1560.10">
    <property type="entry name" value="ABC transporter type 1, transmembrane domain"/>
    <property type="match status" value="1"/>
</dbReference>
<dbReference type="Gene3D" id="3.90.70.10">
    <property type="entry name" value="Cysteine proteinases"/>
    <property type="match status" value="1"/>
</dbReference>
<dbReference type="Gene3D" id="3.40.50.300">
    <property type="entry name" value="P-loop containing nucleotide triphosphate hydrolases"/>
    <property type="match status" value="1"/>
</dbReference>
<dbReference type="InterPro" id="IPR003593">
    <property type="entry name" value="AAA+_ATPase"/>
</dbReference>
<dbReference type="InterPro" id="IPR011527">
    <property type="entry name" value="ABC1_TM_dom"/>
</dbReference>
<dbReference type="InterPro" id="IPR036640">
    <property type="entry name" value="ABC1_TM_sf"/>
</dbReference>
<dbReference type="InterPro" id="IPR003439">
    <property type="entry name" value="ABC_transporter-like_ATP-bd"/>
</dbReference>
<dbReference type="InterPro" id="IPR017871">
    <property type="entry name" value="ABC_transporter-like_CS"/>
</dbReference>
<dbReference type="InterPro" id="IPR033839">
    <property type="entry name" value="Lacticin_481_peptidase"/>
</dbReference>
<dbReference type="InterPro" id="IPR027417">
    <property type="entry name" value="P-loop_NTPase"/>
</dbReference>
<dbReference type="InterPro" id="IPR005074">
    <property type="entry name" value="Peptidase_C39"/>
</dbReference>
<dbReference type="InterPro" id="IPR039421">
    <property type="entry name" value="Type_1_exporter"/>
</dbReference>
<dbReference type="PANTHER" id="PTHR24221">
    <property type="entry name" value="ATP-BINDING CASSETTE SUB-FAMILY B"/>
    <property type="match status" value="1"/>
</dbReference>
<dbReference type="PANTHER" id="PTHR24221:SF654">
    <property type="entry name" value="ATP-BINDING CASSETTE SUB-FAMILY B MEMBER 6"/>
    <property type="match status" value="1"/>
</dbReference>
<dbReference type="Pfam" id="PF00664">
    <property type="entry name" value="ABC_membrane"/>
    <property type="match status" value="1"/>
</dbReference>
<dbReference type="Pfam" id="PF00005">
    <property type="entry name" value="ABC_tran"/>
    <property type="match status" value="1"/>
</dbReference>
<dbReference type="Pfam" id="PF03412">
    <property type="entry name" value="Peptidase_C39"/>
    <property type="match status" value="1"/>
</dbReference>
<dbReference type="SMART" id="SM00382">
    <property type="entry name" value="AAA"/>
    <property type="match status" value="1"/>
</dbReference>
<dbReference type="SUPFAM" id="SSF90123">
    <property type="entry name" value="ABC transporter transmembrane region"/>
    <property type="match status" value="1"/>
</dbReference>
<dbReference type="SUPFAM" id="SSF52540">
    <property type="entry name" value="P-loop containing nucleoside triphosphate hydrolases"/>
    <property type="match status" value="1"/>
</dbReference>
<dbReference type="PROSITE" id="PS50929">
    <property type="entry name" value="ABC_TM1F"/>
    <property type="match status" value="1"/>
</dbReference>
<dbReference type="PROSITE" id="PS00211">
    <property type="entry name" value="ABC_TRANSPORTER_1"/>
    <property type="match status" value="1"/>
</dbReference>
<dbReference type="PROSITE" id="PS50893">
    <property type="entry name" value="ABC_TRANSPORTER_2"/>
    <property type="match status" value="1"/>
</dbReference>
<dbReference type="PROSITE" id="PS50990">
    <property type="entry name" value="PEPTIDASE_C39"/>
    <property type="match status" value="1"/>
</dbReference>
<comment type="function">
    <text>Probably implicated in the export process of the lantibiotic lacticin-481/lactococcin-DR.</text>
</comment>
<comment type="subcellular location">
    <subcellularLocation>
        <location>Cell membrane</location>
        <topology>Multi-pass membrane protein</topology>
    </subcellularLocation>
</comment>
<comment type="similarity">
    <text evidence="4">Belongs to the ABC transporter superfamily.</text>
</comment>
<proteinExistence type="inferred from homology"/>
<gene>
    <name type="primary">lcnDR3</name>
</gene>
<evidence type="ECO:0000255" key="1">
    <source>
        <dbReference type="PROSITE-ProRule" id="PRU00362"/>
    </source>
</evidence>
<evidence type="ECO:0000255" key="2">
    <source>
        <dbReference type="PROSITE-ProRule" id="PRU00434"/>
    </source>
</evidence>
<evidence type="ECO:0000255" key="3">
    <source>
        <dbReference type="PROSITE-ProRule" id="PRU00441"/>
    </source>
</evidence>
<evidence type="ECO:0000305" key="4"/>
<accession>P37608</accession>
<keyword id="KW-0067">ATP-binding</keyword>
<keyword id="KW-0080">Bacteriocin transport</keyword>
<keyword id="KW-1003">Cell membrane</keyword>
<keyword id="KW-0378">Hydrolase</keyword>
<keyword id="KW-0472">Membrane</keyword>
<keyword id="KW-0547">Nucleotide-binding</keyword>
<keyword id="KW-0645">Protease</keyword>
<keyword id="KW-0653">Protein transport</keyword>
<keyword id="KW-0788">Thiol protease</keyword>
<keyword id="KW-1278">Translocase</keyword>
<keyword id="KW-0812">Transmembrane</keyword>
<keyword id="KW-1133">Transmembrane helix</keyword>
<keyword id="KW-0813">Transport</keyword>
<sequence>MKIVLQNNEQDCLLACYSMILGYFGRDVAIHELYSGEMIPPDGLSVSYLKNINMKHQVSMHVYKTDKKNSPNKIFYPKMLPVIIQWNDNHFVVVTKIYRKNVTLIDPAIGKVKYNYNDFMKKFSGYIITLSPNSSFTKKKRISEIIFPLKKIFKNRNTFLYIFSLFISQIVALWFSIILRDILNKSHDITYSFIMMISLVLFQTLSLLMKLGAQKNTNLLYESKISRQIFKGIFSRPLLYFRNNSVGTIIEKINLRTGIRDGILLKIFPSLLNFFTVFIVIIYLGTISFTLTLFLVIMNLLYMIFSFSLISIKRQANIQYTQQTIDFTSVVQEDLNQIEQIKAQANEKECVKRWTKKSAQTIFSYNKILNIDGITSAFNQGFNYICVILMMIFGIYLNQGNLVSIPDLIIFQSGISLFVSAVNQIQDVMFEISRLSIYGNKISDLLIENPQRIDNIEKHSNNAIILKDISYSYELNNYIFNNINFSIKKGEKIAIVGKSGSGKSTLFNILLGLISYEGEVTYGYENLRQIIGVVSQNMNLRKGSLIENIVSNNNSEELDIQKINDVLKDVNMLELVDSLPQKIFSQLFENGKNLSGGQIQRLLIAKSLLNNNKFIFWDEPFSSLDNQNRIHIYKNVLENPDYKSQTIIMISHHLDVLKYVDRVIYIDDKKIMIDKHNNLLLNDSYNSFVNE</sequence>
<protein>
    <recommendedName>
        <fullName>Lacticin-481/lactococcin-DR transport/processing ATP-binding protein lcnDR3</fullName>
        <ecNumber>3.4.22.-</ecNumber>
        <ecNumber>7.-.-.-</ecNumber>
    </recommendedName>
</protein>
<reference key="1">
    <citation type="journal article" date="1994" name="Appl. Environ. Microbiol.">
        <title>Cloning, expression, and nucleotide sequence of genes involved in production of lactococcin DR, a bacteriocin from Lactococcus lactis subsp. lactis.</title>
        <authorList>
            <person name="Rince A."/>
            <person name="Dufour A."/>
            <person name="le Pogam S."/>
            <person name="Thuault D."/>
            <person name="Bourgeois C.M."/>
            <person name="Pennec J.P."/>
        </authorList>
    </citation>
    <scope>NUCLEOTIDE SEQUENCE [GENOMIC DNA]</scope>
    <source>
        <strain>ADRIA 85LO30</strain>
    </source>
</reference>
<organism>
    <name type="scientific">Lactococcus lactis subsp. lactis</name>
    <name type="common">Streptococcus lactis</name>
    <dbReference type="NCBI Taxonomy" id="1360"/>
    <lineage>
        <taxon>Bacteria</taxon>
        <taxon>Bacillati</taxon>
        <taxon>Bacillota</taxon>
        <taxon>Bacilli</taxon>
        <taxon>Lactobacillales</taxon>
        <taxon>Streptococcaceae</taxon>
        <taxon>Lactococcus</taxon>
    </lineage>
</organism>
<name>LCN3_LACLL</name>
<feature type="chain" id="PRO_0000092400" description="Lacticin-481/lactococcin-DR transport/processing ATP-binding protein lcnDR3">
    <location>
        <begin position="1"/>
        <end position="691"/>
    </location>
</feature>
<feature type="transmembrane region" description="Helical" evidence="3">
    <location>
        <begin position="159"/>
        <end position="179"/>
    </location>
</feature>
<feature type="transmembrane region" description="Helical" evidence="3">
    <location>
        <begin position="189"/>
        <end position="209"/>
    </location>
</feature>
<feature type="transmembrane region" description="Helical" evidence="3">
    <location>
        <begin position="262"/>
        <end position="284"/>
    </location>
</feature>
<feature type="transmembrane region" description="Helical" evidence="3">
    <location>
        <begin position="289"/>
        <end position="311"/>
    </location>
</feature>
<feature type="transmembrane region" description="Helical" evidence="3">
    <location>
        <begin position="385"/>
        <end position="405"/>
    </location>
</feature>
<feature type="domain" description="Peptidase C39" evidence="1">
    <location>
        <begin position="6"/>
        <end position="130"/>
    </location>
</feature>
<feature type="domain" description="ABC transmembrane type-1" evidence="3">
    <location>
        <begin position="158"/>
        <end position="434"/>
    </location>
</feature>
<feature type="domain" description="ABC transporter" evidence="1 2">
    <location>
        <begin position="464"/>
        <end position="689"/>
    </location>
</feature>
<feature type="active site" evidence="1">
    <location>
        <position position="12"/>
    </location>
</feature>
<feature type="binding site" evidence="1 2">
    <location>
        <begin position="497"/>
        <end position="504"/>
    </location>
    <ligand>
        <name>ATP</name>
        <dbReference type="ChEBI" id="CHEBI:30616"/>
    </ligand>
</feature>